<proteinExistence type="inferred from homology"/>
<comment type="function">
    <text evidence="1">Broad-specificity nucleoside monophosphate (NMP) kinase that catalyzes the reversible transfer of the terminal phosphate group between nucleoside triphosphates and monophosphates. Also has ATPase activity. Involved in the late maturation steps of the 30S ribosomal particles, specifically 16S rRNA maturation. While NMP activity is not required for ribosome maturation, ATPase activity is. Associates transiently with small ribosomal subunit protein uS11. ATP hydrolysis breaks the interaction with uS11. May temporarily remove uS11 from the ribosome to enable a conformational change of the ribosomal RNA that is needed for the final maturation step of the small ribosomal subunit.</text>
</comment>
<comment type="catalytic activity">
    <reaction evidence="1">
        <text>AMP + ATP = 2 ADP</text>
        <dbReference type="Rhea" id="RHEA:12973"/>
        <dbReference type="ChEBI" id="CHEBI:30616"/>
        <dbReference type="ChEBI" id="CHEBI:456215"/>
        <dbReference type="ChEBI" id="CHEBI:456216"/>
        <dbReference type="EC" id="2.7.4.3"/>
    </reaction>
</comment>
<comment type="catalytic activity">
    <reaction evidence="1">
        <text>ATP + H2O = ADP + phosphate + H(+)</text>
        <dbReference type="Rhea" id="RHEA:13065"/>
        <dbReference type="ChEBI" id="CHEBI:15377"/>
        <dbReference type="ChEBI" id="CHEBI:15378"/>
        <dbReference type="ChEBI" id="CHEBI:30616"/>
        <dbReference type="ChEBI" id="CHEBI:43474"/>
        <dbReference type="ChEBI" id="CHEBI:456216"/>
    </reaction>
</comment>
<comment type="subunit">
    <text evidence="1">Interacts with uS11. Not a structural component of 40S pre-ribosomes, but transiently interacts with them by binding to uS11.</text>
</comment>
<comment type="similarity">
    <text evidence="1">Belongs to the adenylate kinase family. AK6 subfamily.</text>
</comment>
<organism>
    <name type="scientific">Saccharolobus islandicus (strain Y.G.57.14 / Yellowstone #1)</name>
    <name type="common">Sulfolobus islandicus</name>
    <dbReference type="NCBI Taxonomy" id="439386"/>
    <lineage>
        <taxon>Archaea</taxon>
        <taxon>Thermoproteota</taxon>
        <taxon>Thermoprotei</taxon>
        <taxon>Sulfolobales</taxon>
        <taxon>Sulfolobaceae</taxon>
        <taxon>Saccharolobus</taxon>
    </lineage>
</organism>
<evidence type="ECO:0000255" key="1">
    <source>
        <dbReference type="HAMAP-Rule" id="MF_00039"/>
    </source>
</evidence>
<protein>
    <recommendedName>
        <fullName evidence="1">Putative adenylate kinase</fullName>
        <shortName evidence="1">AK</shortName>
        <ecNumber evidence="1">2.7.4.3</ecNumber>
    </recommendedName>
    <alternativeName>
        <fullName evidence="1">ATP-AMP transphosphorylase</fullName>
    </alternativeName>
</protein>
<name>KAD6_SACI7</name>
<gene>
    <name type="ordered locus">YG5714_1736</name>
</gene>
<reference key="1">
    <citation type="journal article" date="2009" name="Proc. Natl. Acad. Sci. U.S.A.">
        <title>Biogeography of the Sulfolobus islandicus pan-genome.</title>
        <authorList>
            <person name="Reno M.L."/>
            <person name="Held N.L."/>
            <person name="Fields C.J."/>
            <person name="Burke P.V."/>
            <person name="Whitaker R.J."/>
        </authorList>
    </citation>
    <scope>NUCLEOTIDE SEQUENCE [LARGE SCALE GENOMIC DNA]</scope>
    <source>
        <strain>Y.G.57.14 / Yellowstone #1</strain>
    </source>
</reference>
<keyword id="KW-0067">ATP-binding</keyword>
<keyword id="KW-0418">Kinase</keyword>
<keyword id="KW-0547">Nucleotide-binding</keyword>
<keyword id="KW-0690">Ribosome biogenesis</keyword>
<keyword id="KW-0698">rRNA processing</keyword>
<keyword id="KW-0808">Transferase</keyword>
<sequence length="187" mass="21247">MIIIVTGTPGVGKTVASKKLSEALNLNYLSLSQFVIENKLYTEYDELRQSYIIDEDKVKEELEKIISTSHLVIETIYPSLVSTADLVVVLRKNPFSLYNELKGRGWADIKVAENVEAEILGVISQEAREAFKDKVCEVDTTEMSTEQILNKILNKQCDGPIEWLVDTKVQRFLEELDKIISSYENDI</sequence>
<accession>C3N6Z8</accession>
<feature type="chain" id="PRO_1000202087" description="Putative adenylate kinase">
    <location>
        <begin position="1"/>
        <end position="187"/>
    </location>
</feature>
<feature type="region of interest" description="NMP" evidence="1">
    <location>
        <begin position="30"/>
        <end position="53"/>
    </location>
</feature>
<feature type="region of interest" description="LID" evidence="1">
    <location>
        <begin position="103"/>
        <end position="113"/>
    </location>
</feature>
<feature type="binding site" evidence="1">
    <location>
        <position position="10"/>
    </location>
    <ligand>
        <name>ATP</name>
        <dbReference type="ChEBI" id="CHEBI:30616"/>
    </ligand>
</feature>
<feature type="binding site" evidence="1">
    <location>
        <position position="12"/>
    </location>
    <ligand>
        <name>ATP</name>
        <dbReference type="ChEBI" id="CHEBI:30616"/>
    </ligand>
</feature>
<feature type="binding site" evidence="1">
    <location>
        <position position="13"/>
    </location>
    <ligand>
        <name>ATP</name>
        <dbReference type="ChEBI" id="CHEBI:30616"/>
    </ligand>
</feature>
<feature type="binding site" evidence="1">
    <location>
        <position position="14"/>
    </location>
    <ligand>
        <name>ATP</name>
        <dbReference type="ChEBI" id="CHEBI:30616"/>
    </ligand>
</feature>
<feature type="binding site" evidence="1">
    <location>
        <position position="15"/>
    </location>
    <ligand>
        <name>ATP</name>
        <dbReference type="ChEBI" id="CHEBI:30616"/>
    </ligand>
</feature>
<feature type="binding site" evidence="1">
    <location>
        <position position="104"/>
    </location>
    <ligand>
        <name>ATP</name>
        <dbReference type="ChEBI" id="CHEBI:30616"/>
    </ligand>
</feature>
<dbReference type="EC" id="2.7.4.3" evidence="1"/>
<dbReference type="EMBL" id="CP001403">
    <property type="protein sequence ID" value="ACP45992.1"/>
    <property type="molecule type" value="Genomic_DNA"/>
</dbReference>
<dbReference type="RefSeq" id="WP_010922979.1">
    <property type="nucleotide sequence ID" value="NC_012622.1"/>
</dbReference>
<dbReference type="SMR" id="C3N6Z8"/>
<dbReference type="KEGG" id="siy:YG5714_1736"/>
<dbReference type="HOGENOM" id="CLU_079096_3_1_2"/>
<dbReference type="Proteomes" id="UP000002308">
    <property type="component" value="Chromosome"/>
</dbReference>
<dbReference type="GO" id="GO:0004017">
    <property type="term" value="F:adenylate kinase activity"/>
    <property type="evidence" value="ECO:0007669"/>
    <property type="project" value="UniProtKB-UniRule"/>
</dbReference>
<dbReference type="GO" id="GO:0005524">
    <property type="term" value="F:ATP binding"/>
    <property type="evidence" value="ECO:0007669"/>
    <property type="project" value="UniProtKB-UniRule"/>
</dbReference>
<dbReference type="GO" id="GO:0016887">
    <property type="term" value="F:ATP hydrolysis activity"/>
    <property type="evidence" value="ECO:0007669"/>
    <property type="project" value="InterPro"/>
</dbReference>
<dbReference type="GO" id="GO:0042274">
    <property type="term" value="P:ribosomal small subunit biogenesis"/>
    <property type="evidence" value="ECO:0007669"/>
    <property type="project" value="UniProtKB-UniRule"/>
</dbReference>
<dbReference type="GO" id="GO:0006364">
    <property type="term" value="P:rRNA processing"/>
    <property type="evidence" value="ECO:0007669"/>
    <property type="project" value="UniProtKB-KW"/>
</dbReference>
<dbReference type="Gene3D" id="3.40.50.300">
    <property type="entry name" value="P-loop containing nucleotide triphosphate hydrolases"/>
    <property type="match status" value="1"/>
</dbReference>
<dbReference type="HAMAP" id="MF_00039">
    <property type="entry name" value="Adenylate_kinase_AK6"/>
    <property type="match status" value="1"/>
</dbReference>
<dbReference type="InterPro" id="IPR020618">
    <property type="entry name" value="Adenyl_kinase_AK6"/>
</dbReference>
<dbReference type="InterPro" id="IPR027417">
    <property type="entry name" value="P-loop_NTPase"/>
</dbReference>
<dbReference type="PANTHER" id="PTHR12595:SF0">
    <property type="entry name" value="ADENYLATE KINASE ISOENZYME 6"/>
    <property type="match status" value="1"/>
</dbReference>
<dbReference type="PANTHER" id="PTHR12595">
    <property type="entry name" value="POS9-ACTIVATING FACTOR FAP7-RELATED"/>
    <property type="match status" value="1"/>
</dbReference>
<dbReference type="Pfam" id="PF13238">
    <property type="entry name" value="AAA_18"/>
    <property type="match status" value="1"/>
</dbReference>
<dbReference type="SUPFAM" id="SSF52540">
    <property type="entry name" value="P-loop containing nucleoside triphosphate hydrolases"/>
    <property type="match status" value="1"/>
</dbReference>